<proteinExistence type="evidence at transcript level"/>
<accession>F5HEU0</accession>
<feature type="signal peptide" evidence="2">
    <location>
        <begin position="1"/>
        <end position="20"/>
    </location>
</feature>
<feature type="chain" id="PRO_0000416721" description="Membrane glycoprotein US3">
    <location>
        <begin position="21"/>
        <end position="186"/>
    </location>
</feature>
<feature type="topological domain" description="Lumenal" evidence="2">
    <location>
        <begin position="21"/>
        <end position="160"/>
    </location>
</feature>
<feature type="transmembrane region" description="Helical" evidence="2">
    <location>
        <begin position="161"/>
        <end position="181"/>
    </location>
</feature>
<feature type="topological domain" description="Cytoplasmic" evidence="2">
    <location>
        <begin position="182"/>
        <end position="186"/>
    </location>
</feature>
<feature type="glycosylation site" description="N-linked (GlcNAc...) asparagine; by host" evidence="2">
    <location>
        <position position="60"/>
    </location>
</feature>
<feature type="disulfide bond" evidence="1">
    <location>
        <begin position="44"/>
        <end position="129"/>
    </location>
</feature>
<protein>
    <recommendedName>
        <fullName>Membrane glycoprotein US3</fullName>
    </recommendedName>
</protein>
<evidence type="ECO:0000250" key="1"/>
<evidence type="ECO:0000255" key="2"/>
<evidence type="ECO:0000305" key="3"/>
<comment type="function">
    <text>Retains, but does not degrade MHC class I heterodimers in the endoplasmic reticulum during the immediate-early period of virus infection, thereby impairing their transport and maturation. Forms a complex with beta-2-microglobulin-associated class I heavy chains, which accumulate in the ER. In consequence, infected cells are masked for immune recognition by cytotoxic T-lymphocytes.</text>
</comment>
<comment type="subunit">
    <text evidence="1">Monomer.</text>
</comment>
<comment type="subcellular location">
    <subcellularLocation>
        <location evidence="1">Host endoplasmic reticulum membrane</location>
        <topology evidence="1">Single-pass type I membrane protein</topology>
    </subcellularLocation>
</comment>
<comment type="developmental stage">
    <text>Expressed at immediate-early period of virus infection and at reduced levels at early-late times.</text>
</comment>
<comment type="PTM">
    <text evidence="1">The signal sequence is not cleaved.</text>
</comment>
<comment type="PTM">
    <text>N-glycosylated; mostly exists in a high-mannose form.</text>
</comment>
<comment type="similarity">
    <text evidence="3">Belongs to the cytomegalovirus US2 family.</text>
</comment>
<name>US03_HCMVM</name>
<keyword id="KW-1015">Disulfide bond</keyword>
<keyword id="KW-0244">Early protein</keyword>
<keyword id="KW-0325">Glycoprotein</keyword>
<keyword id="KW-1038">Host endoplasmic reticulum</keyword>
<keyword id="KW-1043">Host membrane</keyword>
<keyword id="KW-0945">Host-virus interaction</keyword>
<keyword id="KW-0393">Immunoglobulin domain</keyword>
<keyword id="KW-0430">Lectin</keyword>
<keyword id="KW-0465">Mannose-binding</keyword>
<keyword id="KW-0472">Membrane</keyword>
<keyword id="KW-1185">Reference proteome</keyword>
<keyword id="KW-0732">Signal</keyword>
<keyword id="KW-0812">Transmembrane</keyword>
<keyword id="KW-1133">Transmembrane helix</keyword>
<keyword id="KW-0899">Viral immunoevasion</keyword>
<gene>
    <name type="primary">US3</name>
</gene>
<organism>
    <name type="scientific">Human cytomegalovirus (strain Merlin)</name>
    <name type="common">HHV-5</name>
    <name type="synonym">Human herpesvirus 5</name>
    <dbReference type="NCBI Taxonomy" id="295027"/>
    <lineage>
        <taxon>Viruses</taxon>
        <taxon>Duplodnaviria</taxon>
        <taxon>Heunggongvirae</taxon>
        <taxon>Peploviricota</taxon>
        <taxon>Herviviricetes</taxon>
        <taxon>Herpesvirales</taxon>
        <taxon>Orthoherpesviridae</taxon>
        <taxon>Betaherpesvirinae</taxon>
        <taxon>Cytomegalovirus</taxon>
        <taxon>Cytomegalovirus humanbeta5</taxon>
        <taxon>Human cytomegalovirus</taxon>
    </lineage>
</organism>
<reference key="1">
    <citation type="journal article" date="2004" name="J. Gen. Virol.">
        <title>Genetic content of wild-type human cytomegalovirus.</title>
        <authorList>
            <person name="Dolan A."/>
            <person name="Cunningham C."/>
            <person name="Hector R.D."/>
            <person name="Hassan-Walker A.F."/>
            <person name="Lee L."/>
            <person name="Addison C."/>
            <person name="Dargan D.J."/>
            <person name="McGeoch D.J."/>
            <person name="Gatherer D."/>
            <person name="Emery V.C."/>
            <person name="Griffiths P.D."/>
            <person name="Sinzger C."/>
            <person name="McSharry B.P."/>
            <person name="Wilkinson G.W.G."/>
            <person name="Davison A.J."/>
        </authorList>
    </citation>
    <scope>NUCLEOTIDE SEQUENCE [LARGE SCALE GENOMIC DNA]</scope>
</reference>
<sequence length="186" mass="21556">MKPVLVLAILAVLFLRLADSVPRPLNVVVSEIKSAHFRVEENQCWFHMGMLYFKGRMSGNFTKKHFVNVGIVSQSYMDRLQVSGEQYHHDERGAYFEWNIGGYPVSHTVDMVDITLSTRWGDPKKYAACVPQVRMDYSSQTINWYLQRSMRDDNWGLLFRTLLVYLFSLVVLVLLTVGVSARLRFI</sequence>
<dbReference type="EMBL" id="AY446894">
    <property type="protein sequence ID" value="AAR31694.1"/>
    <property type="molecule type" value="Genomic_DNA"/>
</dbReference>
<dbReference type="RefSeq" id="YP_081590.1">
    <property type="nucleotide sequence ID" value="NC_006273.2"/>
</dbReference>
<dbReference type="SMR" id="F5HEU0"/>
<dbReference type="BioGRID" id="1678085">
    <property type="interactions" value="2"/>
</dbReference>
<dbReference type="GlyCosmos" id="F5HEU0">
    <property type="glycosylation" value="1 site, No reported glycans"/>
</dbReference>
<dbReference type="DNASU" id="3077532"/>
<dbReference type="GeneID" id="3077532"/>
<dbReference type="KEGG" id="vg:3077532"/>
<dbReference type="Reactome" id="R-HSA-9609690">
    <property type="pathway name" value="HCMV Early Events"/>
</dbReference>
<dbReference type="Proteomes" id="UP000000938">
    <property type="component" value="Segment"/>
</dbReference>
<dbReference type="GO" id="GO:0044167">
    <property type="term" value="C:host cell endoplasmic reticulum membrane"/>
    <property type="evidence" value="ECO:0007669"/>
    <property type="project" value="UniProtKB-SubCell"/>
</dbReference>
<dbReference type="GO" id="GO:0016020">
    <property type="term" value="C:membrane"/>
    <property type="evidence" value="ECO:0007669"/>
    <property type="project" value="UniProtKB-KW"/>
</dbReference>
<dbReference type="GO" id="GO:0005537">
    <property type="term" value="F:D-mannose binding"/>
    <property type="evidence" value="ECO:0007669"/>
    <property type="project" value="UniProtKB-KW"/>
</dbReference>
<dbReference type="InterPro" id="IPR009237">
    <property type="entry name" value="Herpes_US2/US3"/>
</dbReference>
<dbReference type="InterPro" id="IPR014756">
    <property type="entry name" value="Ig_E-set"/>
</dbReference>
<dbReference type="Pfam" id="PF05963">
    <property type="entry name" value="Cytomega_US3"/>
    <property type="match status" value="1"/>
</dbReference>
<dbReference type="SUPFAM" id="SSF81296">
    <property type="entry name" value="E set domains"/>
    <property type="match status" value="1"/>
</dbReference>
<organismHost>
    <name type="scientific">Homo sapiens</name>
    <name type="common">Human</name>
    <dbReference type="NCBI Taxonomy" id="9606"/>
</organismHost>